<proteinExistence type="inferred from homology"/>
<name>RIMP_PSEPK</name>
<sequence>MHEGVQVSSKLEQLQALLAPVVEGLGYQCWGIEYVSQGKHSVLRIYIDKEGGILVDDCEAVSRQASAILDVEDPISSEYTLEVSSPGMDRPLFTLEQFASHAGEQVKIKLRSPFEGRRNFQGLLRGVEEQDVVVQVDNQEFLLPIDSIDKANIIPSFD</sequence>
<reference key="1">
    <citation type="journal article" date="2002" name="Environ. Microbiol.">
        <title>Complete genome sequence and comparative analysis of the metabolically versatile Pseudomonas putida KT2440.</title>
        <authorList>
            <person name="Nelson K.E."/>
            <person name="Weinel C."/>
            <person name="Paulsen I.T."/>
            <person name="Dodson R.J."/>
            <person name="Hilbert H."/>
            <person name="Martins dos Santos V.A.P."/>
            <person name="Fouts D.E."/>
            <person name="Gill S.R."/>
            <person name="Pop M."/>
            <person name="Holmes M."/>
            <person name="Brinkac L.M."/>
            <person name="Beanan M.J."/>
            <person name="DeBoy R.T."/>
            <person name="Daugherty S.C."/>
            <person name="Kolonay J.F."/>
            <person name="Madupu R."/>
            <person name="Nelson W.C."/>
            <person name="White O."/>
            <person name="Peterson J.D."/>
            <person name="Khouri H.M."/>
            <person name="Hance I."/>
            <person name="Chris Lee P."/>
            <person name="Holtzapple E.K."/>
            <person name="Scanlan D."/>
            <person name="Tran K."/>
            <person name="Moazzez A."/>
            <person name="Utterback T.R."/>
            <person name="Rizzo M."/>
            <person name="Lee K."/>
            <person name="Kosack D."/>
            <person name="Moestl D."/>
            <person name="Wedler H."/>
            <person name="Lauber J."/>
            <person name="Stjepandic D."/>
            <person name="Hoheisel J."/>
            <person name="Straetz M."/>
            <person name="Heim S."/>
            <person name="Kiewitz C."/>
            <person name="Eisen J.A."/>
            <person name="Timmis K.N."/>
            <person name="Duesterhoeft A."/>
            <person name="Tuemmler B."/>
            <person name="Fraser C.M."/>
        </authorList>
    </citation>
    <scope>NUCLEOTIDE SEQUENCE [LARGE SCALE GENOMIC DNA]</scope>
    <source>
        <strain>ATCC 47054 / DSM 6125 / CFBP 8728 / NCIMB 11950 / KT2440</strain>
    </source>
</reference>
<dbReference type="EMBL" id="AE015451">
    <property type="protein sequence ID" value="AAN70286.1"/>
    <property type="status" value="ALT_INIT"/>
    <property type="molecule type" value="Genomic_DNA"/>
</dbReference>
<dbReference type="RefSeq" id="NP_746822.1">
    <property type="nucleotide sequence ID" value="NC_002947.4"/>
</dbReference>
<dbReference type="SMR" id="Q88DV5"/>
<dbReference type="STRING" id="160488.PP_4714"/>
<dbReference type="PaxDb" id="160488-PP_4714"/>
<dbReference type="KEGG" id="ppu:PP_4714"/>
<dbReference type="PATRIC" id="fig|160488.4.peg.5024"/>
<dbReference type="eggNOG" id="COG0779">
    <property type="taxonomic scope" value="Bacteria"/>
</dbReference>
<dbReference type="HOGENOM" id="CLU_070525_1_1_6"/>
<dbReference type="OrthoDB" id="9805006at2"/>
<dbReference type="PhylomeDB" id="Q88DV5"/>
<dbReference type="Proteomes" id="UP000000556">
    <property type="component" value="Chromosome"/>
</dbReference>
<dbReference type="GO" id="GO:0005829">
    <property type="term" value="C:cytosol"/>
    <property type="evidence" value="ECO:0007669"/>
    <property type="project" value="TreeGrafter"/>
</dbReference>
<dbReference type="GO" id="GO:0000028">
    <property type="term" value="P:ribosomal small subunit assembly"/>
    <property type="evidence" value="ECO:0007669"/>
    <property type="project" value="TreeGrafter"/>
</dbReference>
<dbReference type="GO" id="GO:0006412">
    <property type="term" value="P:translation"/>
    <property type="evidence" value="ECO:0007669"/>
    <property type="project" value="TreeGrafter"/>
</dbReference>
<dbReference type="CDD" id="cd01734">
    <property type="entry name" value="YlxS_C"/>
    <property type="match status" value="1"/>
</dbReference>
<dbReference type="FunFam" id="3.30.300.70:FF:000001">
    <property type="entry name" value="Ribosome maturation factor RimP"/>
    <property type="match status" value="1"/>
</dbReference>
<dbReference type="Gene3D" id="2.30.30.180">
    <property type="entry name" value="Ribosome maturation factor RimP, C-terminal domain"/>
    <property type="match status" value="1"/>
</dbReference>
<dbReference type="Gene3D" id="3.30.300.70">
    <property type="entry name" value="RimP-like superfamily, N-terminal"/>
    <property type="match status" value="1"/>
</dbReference>
<dbReference type="HAMAP" id="MF_01077">
    <property type="entry name" value="RimP"/>
    <property type="match status" value="1"/>
</dbReference>
<dbReference type="InterPro" id="IPR003728">
    <property type="entry name" value="Ribosome_maturation_RimP"/>
</dbReference>
<dbReference type="InterPro" id="IPR028998">
    <property type="entry name" value="RimP_C"/>
</dbReference>
<dbReference type="InterPro" id="IPR036847">
    <property type="entry name" value="RimP_C_sf"/>
</dbReference>
<dbReference type="InterPro" id="IPR028989">
    <property type="entry name" value="RimP_N"/>
</dbReference>
<dbReference type="InterPro" id="IPR035956">
    <property type="entry name" value="RimP_N_sf"/>
</dbReference>
<dbReference type="NCBIfam" id="NF000927">
    <property type="entry name" value="PRK00092.1-1"/>
    <property type="match status" value="1"/>
</dbReference>
<dbReference type="PANTHER" id="PTHR33867">
    <property type="entry name" value="RIBOSOME MATURATION FACTOR RIMP"/>
    <property type="match status" value="1"/>
</dbReference>
<dbReference type="PANTHER" id="PTHR33867:SF1">
    <property type="entry name" value="RIBOSOME MATURATION FACTOR RIMP"/>
    <property type="match status" value="1"/>
</dbReference>
<dbReference type="Pfam" id="PF17384">
    <property type="entry name" value="DUF150_C"/>
    <property type="match status" value="1"/>
</dbReference>
<dbReference type="Pfam" id="PF02576">
    <property type="entry name" value="RimP_N"/>
    <property type="match status" value="1"/>
</dbReference>
<dbReference type="SUPFAM" id="SSF74942">
    <property type="entry name" value="YhbC-like, C-terminal domain"/>
    <property type="match status" value="1"/>
</dbReference>
<dbReference type="SUPFAM" id="SSF75420">
    <property type="entry name" value="YhbC-like, N-terminal domain"/>
    <property type="match status" value="1"/>
</dbReference>
<evidence type="ECO:0000255" key="1">
    <source>
        <dbReference type="HAMAP-Rule" id="MF_01077"/>
    </source>
</evidence>
<evidence type="ECO:0000305" key="2"/>
<protein>
    <recommendedName>
        <fullName evidence="1">Ribosome maturation factor RimP</fullName>
    </recommendedName>
</protein>
<feature type="chain" id="PRO_0000181906" description="Ribosome maturation factor RimP">
    <location>
        <begin position="1"/>
        <end position="158"/>
    </location>
</feature>
<comment type="function">
    <text evidence="1">Required for maturation of 30S ribosomal subunits.</text>
</comment>
<comment type="subcellular location">
    <subcellularLocation>
        <location evidence="1">Cytoplasm</location>
    </subcellularLocation>
</comment>
<comment type="similarity">
    <text evidence="1">Belongs to the RimP family.</text>
</comment>
<comment type="sequence caution" evidence="2">
    <conflict type="erroneous initiation">
        <sequence resource="EMBL-CDS" id="AAN70286"/>
    </conflict>
</comment>
<gene>
    <name evidence="1" type="primary">rimP</name>
    <name type="ordered locus">PP_4714</name>
</gene>
<keyword id="KW-0963">Cytoplasm</keyword>
<keyword id="KW-1185">Reference proteome</keyword>
<keyword id="KW-0690">Ribosome biogenesis</keyword>
<organism>
    <name type="scientific">Pseudomonas putida (strain ATCC 47054 / DSM 6125 / CFBP 8728 / NCIMB 11950 / KT2440)</name>
    <dbReference type="NCBI Taxonomy" id="160488"/>
    <lineage>
        <taxon>Bacteria</taxon>
        <taxon>Pseudomonadati</taxon>
        <taxon>Pseudomonadota</taxon>
        <taxon>Gammaproteobacteria</taxon>
        <taxon>Pseudomonadales</taxon>
        <taxon>Pseudomonadaceae</taxon>
        <taxon>Pseudomonas</taxon>
    </lineage>
</organism>
<accession>Q88DV5</accession>